<organismHost>
    <name type="scientific">Antirrhinum majus</name>
    <name type="common">Garden snapdragon</name>
    <dbReference type="NCBI Taxonomy" id="4151"/>
</organismHost>
<organismHost>
    <name type="scientific">Capsicum</name>
    <name type="common">peppers</name>
    <dbReference type="NCBI Taxonomy" id="4071"/>
</organismHost>
<organismHost>
    <name type="scientific">Delphinium</name>
    <dbReference type="NCBI Taxonomy" id="46246"/>
</organismHost>
<organismHost>
    <name type="scientific">Petunia</name>
    <dbReference type="NCBI Taxonomy" id="4101"/>
</organismHost>
<organismHost>
    <name type="scientific">Solanum lycopersicum</name>
    <name type="common">Tomato</name>
    <name type="synonym">Lycopersicon esculentum</name>
    <dbReference type="NCBI Taxonomy" id="4081"/>
</organismHost>
<organismHost>
    <name type="scientific">Tagetes</name>
    <name type="common">marigolds</name>
    <dbReference type="NCBI Taxonomy" id="13707"/>
</organismHost>
<feature type="chain" id="PRO_0000144971" description="Movement protein">
    <location>
        <begin position="1"/>
        <end position="264"/>
    </location>
</feature>
<feature type="region of interest" description="Disordered" evidence="4">
    <location>
        <begin position="211"/>
        <end position="264"/>
    </location>
</feature>
<feature type="compositionally biased region" description="Acidic residues" evidence="4">
    <location>
        <begin position="241"/>
        <end position="255"/>
    </location>
</feature>
<evidence type="ECO:0000250" key="1">
    <source>
        <dbReference type="UniProtKB" id="A0A0S4IJL0"/>
    </source>
</evidence>
<evidence type="ECO:0000250" key="2">
    <source>
        <dbReference type="UniProtKB" id="P03583"/>
    </source>
</evidence>
<evidence type="ECO:0000250" key="3">
    <source>
        <dbReference type="UniProtKB" id="P69513"/>
    </source>
</evidence>
<evidence type="ECO:0000256" key="4">
    <source>
        <dbReference type="SAM" id="MobiDB-lite"/>
    </source>
</evidence>
<evidence type="ECO:0000305" key="5"/>
<protein>
    <recommendedName>
        <fullName>Movement protein</fullName>
    </recommendedName>
    <alternativeName>
        <fullName>30 kDa protein</fullName>
    </alternativeName>
    <alternativeName>
        <fullName>Cell-to-cell transport protein</fullName>
    </alternativeName>
</protein>
<sequence>MPLVVKGKVNINEFIDLSKSEKLLPSMFTPVKSVMVSKVDKIMVHENESLSEVNLLKGVKLIEGGYVWLVGLVVSGEWNLPDNCRGGVSVCMVDKRMERADEATLGSYYTAAAKKRFQFKVVPNYGITTEDAEKNIWQVLVNIKNVKMSAGYCPLSLEFVSVCIVYKNNIKLGLREKVTSVNDGGPMELSEEVVDEFMENVPMSVRLAKFRTKSSKRGPKNNNNLGKGRSGGRPKPKSVDEVEEEFDNLIEDEAETSVADSDSY</sequence>
<keyword id="KW-1031">Host cell junction</keyword>
<keyword id="KW-1035">Host cytoplasm</keyword>
<keyword id="KW-1037">Host cytoskeleton</keyword>
<keyword id="KW-0694">RNA-binding</keyword>
<keyword id="KW-0813">Transport</keyword>
<keyword id="KW-0916">Viral movement protein</keyword>
<accession>P29799</accession>
<gene>
    <name type="primary">MP</name>
</gene>
<organism>
    <name type="scientific">Tomato mosaic virus (strain LIIa)</name>
    <name type="common">ToMV</name>
    <dbReference type="NCBI Taxonomy" id="31748"/>
    <lineage>
        <taxon>Viruses</taxon>
        <taxon>Riboviria</taxon>
        <taxon>Orthornavirae</taxon>
        <taxon>Kitrinoviricota</taxon>
        <taxon>Alsuviricetes</taxon>
        <taxon>Martellivirales</taxon>
        <taxon>Virgaviridae</taxon>
        <taxon>Tobamovirus</taxon>
        <taxon>Tomato mosaic virus</taxon>
    </lineage>
</organism>
<comment type="function">
    <text evidence="2 3">Transports viral genome to neighboring plant cells directly through plasmosdesmata, without any budding. The movement protein allows efficient cell to cell propagation, by bypassing the host cell wall barrier. Forms a ribonucleoprotein complex with viral RNA. Binds microtubules and modulates microtubule stability. Can bind double-stranded DNA. Triggers host hypersensitive defense reaction in incompatible plants harboring resistance (R) proteins.</text>
</comment>
<comment type="subunit">
    <text evidence="1 2 3">Binds to host RBCS at the plasmodesmata; this interaction seems required for viral systemic movement (By similarity). In resistant plants, interacts with host MBP2C at host microtubules; this interaction prevents virus cell to cell movement. In resistant plants, interacts with host resistance (R) protein (e.g. tomato ToMV resistance protein TM-2(2), AC Q71BG9) at the host plasma membrane; this interaction triggers host defense responses leading to programmed cell death (By similarity).</text>
</comment>
<comment type="subcellular location">
    <subcellularLocation>
        <location evidence="3">Host cytoplasm</location>
        <location evidence="3">Host cytoskeleton</location>
    </subcellularLocation>
    <subcellularLocation>
        <location evidence="3">Host cell junction</location>
        <location evidence="3">Host plasmodesma</location>
    </subcellularLocation>
    <text evidence="2 3">Binds to the host cytoskeleton before being transported to the host plasmodesmata. Observed in virus replication complexes (VRCs) of tobamovirus infected host cells (By similarity). In resistant plants, targeted to the host plasma membrane via the interaction with host resistance (R) protein TM-2 (e.g. tomato ToMV resistance protein TM-2(2), AC Q71BG9) (By similarity).</text>
</comment>
<comment type="similarity">
    <text evidence="5">Belongs to the tobamovirus movement protein family.</text>
</comment>
<proteinExistence type="inferred from homology"/>
<reference key="1">
    <citation type="journal article" date="1992" name="J. Gen. Virol.">
        <title>Nucleotide sequence analysis of the movement genes of resistance breaking strains of tomato mosaic virus.</title>
        <authorList>
            <person name="Calder V.L."/>
            <person name="Palukaitis P."/>
        </authorList>
    </citation>
    <scope>NUCLEOTIDE SEQUENCE</scope>
</reference>
<dbReference type="PIR" id="JQ1456">
    <property type="entry name" value="WMBVL1"/>
</dbReference>
<dbReference type="GO" id="GO:0030430">
    <property type="term" value="C:host cell cytoplasm"/>
    <property type="evidence" value="ECO:0007669"/>
    <property type="project" value="UniProtKB-KW"/>
</dbReference>
<dbReference type="GO" id="GO:0044219">
    <property type="term" value="C:host cell plasmodesma"/>
    <property type="evidence" value="ECO:0007669"/>
    <property type="project" value="UniProtKB-SubCell"/>
</dbReference>
<dbReference type="GO" id="GO:0044163">
    <property type="term" value="C:host cytoskeleton"/>
    <property type="evidence" value="ECO:0007669"/>
    <property type="project" value="UniProtKB-SubCell"/>
</dbReference>
<dbReference type="GO" id="GO:0003723">
    <property type="term" value="F:RNA binding"/>
    <property type="evidence" value="ECO:0007669"/>
    <property type="project" value="UniProtKB-KW"/>
</dbReference>
<dbReference type="GO" id="GO:0046740">
    <property type="term" value="P:transport of virus in host, cell to cell"/>
    <property type="evidence" value="ECO:0007669"/>
    <property type="project" value="UniProtKB-KW"/>
</dbReference>
<dbReference type="InterPro" id="IPR001022">
    <property type="entry name" value="TMV_movement"/>
</dbReference>
<dbReference type="InterPro" id="IPR028919">
    <property type="entry name" value="Viral_movement"/>
</dbReference>
<dbReference type="Pfam" id="PF01107">
    <property type="entry name" value="MP"/>
    <property type="match status" value="1"/>
</dbReference>
<dbReference type="PRINTS" id="PR00964">
    <property type="entry name" value="MOVEMENT"/>
</dbReference>
<name>MVP_TOMLA</name>